<sequence>MRKKITIPEILLMKQEGRKVTVLTAYDYPTARLVDAGGVDAILVGDSAGVVFSGHENTLPVTMDEMLYHVKAVVRARPKALVVADMPFMACQSGEIEALKNCGRMLQEGGAEAVKIEGGSNMAPIIRAVTEMDIPVMGHVGLTPQSVHRMGGYKVQGRKDQAERILEDAHAVQEAGAFAVVLEGIPAKLAARITEMLEIPTIGIGAGPACDGQVLVIHDILGLCEKYSPKFVKRYADLAPLITEAARQYVSEVKDGTFPTEEHSFS</sequence>
<evidence type="ECO:0000255" key="1">
    <source>
        <dbReference type="HAMAP-Rule" id="MF_00156"/>
    </source>
</evidence>
<reference key="1">
    <citation type="submission" date="2008-05" db="EMBL/GenBank/DDBJ databases">
        <title>Complete sequence of chromosome of Geobacter lovleyi SZ.</title>
        <authorList>
            <consortium name="US DOE Joint Genome Institute"/>
            <person name="Lucas S."/>
            <person name="Copeland A."/>
            <person name="Lapidus A."/>
            <person name="Glavina del Rio T."/>
            <person name="Dalin E."/>
            <person name="Tice H."/>
            <person name="Bruce D."/>
            <person name="Goodwin L."/>
            <person name="Pitluck S."/>
            <person name="Chertkov O."/>
            <person name="Meincke L."/>
            <person name="Brettin T."/>
            <person name="Detter J.C."/>
            <person name="Han C."/>
            <person name="Tapia R."/>
            <person name="Kuske C.R."/>
            <person name="Schmutz J."/>
            <person name="Larimer F."/>
            <person name="Land M."/>
            <person name="Hauser L."/>
            <person name="Kyrpides N."/>
            <person name="Mikhailova N."/>
            <person name="Sung Y."/>
            <person name="Fletcher K.E."/>
            <person name="Ritalahti K.M."/>
            <person name="Loeffler F.E."/>
            <person name="Richardson P."/>
        </authorList>
    </citation>
    <scope>NUCLEOTIDE SEQUENCE [LARGE SCALE GENOMIC DNA]</scope>
    <source>
        <strain>ATCC BAA-1151 / DSM 17278 / SZ</strain>
    </source>
</reference>
<dbReference type="EC" id="2.1.2.11" evidence="1"/>
<dbReference type="EMBL" id="CP001089">
    <property type="protein sequence ID" value="ACD94680.1"/>
    <property type="molecule type" value="Genomic_DNA"/>
</dbReference>
<dbReference type="RefSeq" id="WP_012469030.1">
    <property type="nucleotide sequence ID" value="NC_010814.1"/>
</dbReference>
<dbReference type="SMR" id="B3E5K9"/>
<dbReference type="STRING" id="398767.Glov_0957"/>
<dbReference type="KEGG" id="glo:Glov_0957"/>
<dbReference type="eggNOG" id="COG0413">
    <property type="taxonomic scope" value="Bacteria"/>
</dbReference>
<dbReference type="HOGENOM" id="CLU_036645_1_0_7"/>
<dbReference type="OrthoDB" id="9781789at2"/>
<dbReference type="UniPathway" id="UPA00028">
    <property type="reaction ID" value="UER00003"/>
</dbReference>
<dbReference type="Proteomes" id="UP000002420">
    <property type="component" value="Chromosome"/>
</dbReference>
<dbReference type="GO" id="GO:0005737">
    <property type="term" value="C:cytoplasm"/>
    <property type="evidence" value="ECO:0007669"/>
    <property type="project" value="UniProtKB-SubCell"/>
</dbReference>
<dbReference type="GO" id="GO:0003864">
    <property type="term" value="F:3-methyl-2-oxobutanoate hydroxymethyltransferase activity"/>
    <property type="evidence" value="ECO:0007669"/>
    <property type="project" value="UniProtKB-UniRule"/>
</dbReference>
<dbReference type="GO" id="GO:0000287">
    <property type="term" value="F:magnesium ion binding"/>
    <property type="evidence" value="ECO:0007669"/>
    <property type="project" value="TreeGrafter"/>
</dbReference>
<dbReference type="GO" id="GO:0015940">
    <property type="term" value="P:pantothenate biosynthetic process"/>
    <property type="evidence" value="ECO:0007669"/>
    <property type="project" value="UniProtKB-UniRule"/>
</dbReference>
<dbReference type="CDD" id="cd06557">
    <property type="entry name" value="KPHMT-like"/>
    <property type="match status" value="1"/>
</dbReference>
<dbReference type="FunFam" id="3.20.20.60:FF:000003">
    <property type="entry name" value="3-methyl-2-oxobutanoate hydroxymethyltransferase"/>
    <property type="match status" value="1"/>
</dbReference>
<dbReference type="Gene3D" id="3.20.20.60">
    <property type="entry name" value="Phosphoenolpyruvate-binding domains"/>
    <property type="match status" value="1"/>
</dbReference>
<dbReference type="HAMAP" id="MF_00156">
    <property type="entry name" value="PanB"/>
    <property type="match status" value="1"/>
</dbReference>
<dbReference type="InterPro" id="IPR003700">
    <property type="entry name" value="Pantoate_hydroxy_MeTrfase"/>
</dbReference>
<dbReference type="InterPro" id="IPR015813">
    <property type="entry name" value="Pyrv/PenolPyrv_kinase-like_dom"/>
</dbReference>
<dbReference type="InterPro" id="IPR040442">
    <property type="entry name" value="Pyrv_kinase-like_dom_sf"/>
</dbReference>
<dbReference type="NCBIfam" id="TIGR00222">
    <property type="entry name" value="panB"/>
    <property type="match status" value="1"/>
</dbReference>
<dbReference type="NCBIfam" id="NF001452">
    <property type="entry name" value="PRK00311.1"/>
    <property type="match status" value="1"/>
</dbReference>
<dbReference type="PANTHER" id="PTHR20881">
    <property type="entry name" value="3-METHYL-2-OXOBUTANOATE HYDROXYMETHYLTRANSFERASE"/>
    <property type="match status" value="1"/>
</dbReference>
<dbReference type="PANTHER" id="PTHR20881:SF0">
    <property type="entry name" value="3-METHYL-2-OXOBUTANOATE HYDROXYMETHYLTRANSFERASE"/>
    <property type="match status" value="1"/>
</dbReference>
<dbReference type="Pfam" id="PF02548">
    <property type="entry name" value="Pantoate_transf"/>
    <property type="match status" value="1"/>
</dbReference>
<dbReference type="PIRSF" id="PIRSF000388">
    <property type="entry name" value="Pantoate_hydroxy_MeTrfase"/>
    <property type="match status" value="1"/>
</dbReference>
<dbReference type="SUPFAM" id="SSF51621">
    <property type="entry name" value="Phosphoenolpyruvate/pyruvate domain"/>
    <property type="match status" value="1"/>
</dbReference>
<keyword id="KW-0963">Cytoplasm</keyword>
<keyword id="KW-0460">Magnesium</keyword>
<keyword id="KW-0479">Metal-binding</keyword>
<keyword id="KW-0566">Pantothenate biosynthesis</keyword>
<keyword id="KW-1185">Reference proteome</keyword>
<keyword id="KW-0808">Transferase</keyword>
<feature type="chain" id="PRO_1000096968" description="3-methyl-2-oxobutanoate hydroxymethyltransferase">
    <location>
        <begin position="1"/>
        <end position="266"/>
    </location>
</feature>
<feature type="active site" description="Proton acceptor" evidence="1">
    <location>
        <position position="183"/>
    </location>
</feature>
<feature type="binding site" evidence="1">
    <location>
        <begin position="46"/>
        <end position="47"/>
    </location>
    <ligand>
        <name>3-methyl-2-oxobutanoate</name>
        <dbReference type="ChEBI" id="CHEBI:11851"/>
    </ligand>
</feature>
<feature type="binding site" evidence="1">
    <location>
        <position position="46"/>
    </location>
    <ligand>
        <name>Mg(2+)</name>
        <dbReference type="ChEBI" id="CHEBI:18420"/>
    </ligand>
</feature>
<feature type="binding site" evidence="1">
    <location>
        <position position="85"/>
    </location>
    <ligand>
        <name>3-methyl-2-oxobutanoate</name>
        <dbReference type="ChEBI" id="CHEBI:11851"/>
    </ligand>
</feature>
<feature type="binding site" evidence="1">
    <location>
        <position position="85"/>
    </location>
    <ligand>
        <name>Mg(2+)</name>
        <dbReference type="ChEBI" id="CHEBI:18420"/>
    </ligand>
</feature>
<feature type="binding site" evidence="1">
    <location>
        <position position="115"/>
    </location>
    <ligand>
        <name>3-methyl-2-oxobutanoate</name>
        <dbReference type="ChEBI" id="CHEBI:11851"/>
    </ligand>
</feature>
<feature type="binding site" evidence="1">
    <location>
        <position position="117"/>
    </location>
    <ligand>
        <name>Mg(2+)</name>
        <dbReference type="ChEBI" id="CHEBI:18420"/>
    </ligand>
</feature>
<accession>B3E5K9</accession>
<comment type="function">
    <text evidence="1">Catalyzes the reversible reaction in which hydroxymethyl group from 5,10-methylenetetrahydrofolate is transferred onto alpha-ketoisovalerate to form ketopantoate.</text>
</comment>
<comment type="catalytic activity">
    <reaction evidence="1">
        <text>3-methyl-2-oxobutanoate + (6R)-5,10-methylene-5,6,7,8-tetrahydrofolate + H2O = 2-dehydropantoate + (6S)-5,6,7,8-tetrahydrofolate</text>
        <dbReference type="Rhea" id="RHEA:11824"/>
        <dbReference type="ChEBI" id="CHEBI:11561"/>
        <dbReference type="ChEBI" id="CHEBI:11851"/>
        <dbReference type="ChEBI" id="CHEBI:15377"/>
        <dbReference type="ChEBI" id="CHEBI:15636"/>
        <dbReference type="ChEBI" id="CHEBI:57453"/>
        <dbReference type="EC" id="2.1.2.11"/>
    </reaction>
</comment>
<comment type="cofactor">
    <cofactor evidence="1">
        <name>Mg(2+)</name>
        <dbReference type="ChEBI" id="CHEBI:18420"/>
    </cofactor>
    <text evidence="1">Binds 1 Mg(2+) ion per subunit.</text>
</comment>
<comment type="pathway">
    <text evidence="1">Cofactor biosynthesis; (R)-pantothenate biosynthesis; (R)-pantoate from 3-methyl-2-oxobutanoate: step 1/2.</text>
</comment>
<comment type="subunit">
    <text evidence="1">Homodecamer; pentamer of dimers.</text>
</comment>
<comment type="subcellular location">
    <subcellularLocation>
        <location evidence="1">Cytoplasm</location>
    </subcellularLocation>
</comment>
<comment type="similarity">
    <text evidence="1">Belongs to the PanB family.</text>
</comment>
<protein>
    <recommendedName>
        <fullName evidence="1">3-methyl-2-oxobutanoate hydroxymethyltransferase</fullName>
        <ecNumber evidence="1">2.1.2.11</ecNumber>
    </recommendedName>
    <alternativeName>
        <fullName evidence="1">Ketopantoate hydroxymethyltransferase</fullName>
        <shortName evidence="1">KPHMT</shortName>
    </alternativeName>
</protein>
<proteinExistence type="inferred from homology"/>
<gene>
    <name evidence="1" type="primary">panB</name>
    <name type="ordered locus">Glov_0957</name>
</gene>
<name>PANB_TRIL1</name>
<organism>
    <name type="scientific">Trichlorobacter lovleyi (strain ATCC BAA-1151 / DSM 17278 / SZ)</name>
    <name type="common">Geobacter lovleyi</name>
    <dbReference type="NCBI Taxonomy" id="398767"/>
    <lineage>
        <taxon>Bacteria</taxon>
        <taxon>Pseudomonadati</taxon>
        <taxon>Thermodesulfobacteriota</taxon>
        <taxon>Desulfuromonadia</taxon>
        <taxon>Geobacterales</taxon>
        <taxon>Geobacteraceae</taxon>
        <taxon>Trichlorobacter</taxon>
    </lineage>
</organism>